<keyword id="KW-0240">DNA-directed RNA polymerase</keyword>
<keyword id="KW-0539">Nucleus</keyword>
<keyword id="KW-1185">Reference proteome</keyword>
<keyword id="KW-0804">Transcription</keyword>
<sequence length="293" mass="33474">MSEELENKFLDLCHKYPTGLTQQMIEVSLGHKMEEIVKVINNLIKQGRLMLIQNSDETTSYKEVNPEDQAKFRGLGVEDFLIYQLIEASSNTGAWTRELKNSSGYQQVQITKILKTLESRKLIKSVKSIQSGRKKVYMLYNMEPSREITGGQLYSDQSYDHQYIQIMKMHIKTFVDNKGAVDLADIITYLRKVAEEATSQSLGPEDIQALVNTVIYDGDIEEMRDTRMGAMLGRRSGILYKPTKTPIPVNNFCNMPCGNCPVFDICSDNGLVSPKRCVYFKQYLEQDDESLDF</sequence>
<evidence type="ECO:0000250" key="1"/>
<evidence type="ECO:0000305" key="2"/>
<comment type="function">
    <text evidence="1">DNA-dependent RNA polymerase catalyzes the transcription of DNA into RNA using the four ribonucleoside triphosphates as substrates. Specific peripheric component of RNA polymerase III which synthesizes small RNAs, such as 5S rRNA and tRNAs. May direct RNA Pol III binding to the TFIIIB-DNA complex (By similarity).</text>
</comment>
<comment type="subunit">
    <text evidence="1">Component of the RNA polymerase III (Pol III) complex.</text>
</comment>
<comment type="subcellular location">
    <subcellularLocation>
        <location evidence="1">Nucleus</location>
    </subcellularLocation>
</comment>
<comment type="similarity">
    <text evidence="2">Belongs to the eukaryotic RPC34/RPC39 RNA polymerase subunit family.</text>
</comment>
<reference key="1">
    <citation type="journal article" date="2002" name="Nature">
        <title>Sequence and analysis of chromosome 2 of Dictyostelium discoideum.</title>
        <authorList>
            <person name="Gloeckner G."/>
            <person name="Eichinger L."/>
            <person name="Szafranski K."/>
            <person name="Pachebat J.A."/>
            <person name="Bankier A.T."/>
            <person name="Dear P.H."/>
            <person name="Lehmann R."/>
            <person name="Baumgart C."/>
            <person name="Parra G."/>
            <person name="Abril J.F."/>
            <person name="Guigo R."/>
            <person name="Kumpf K."/>
            <person name="Tunggal B."/>
            <person name="Cox E.C."/>
            <person name="Quail M.A."/>
            <person name="Platzer M."/>
            <person name="Rosenthal A."/>
            <person name="Noegel A.A."/>
        </authorList>
    </citation>
    <scope>NUCLEOTIDE SEQUENCE [LARGE SCALE GENOMIC DNA]</scope>
    <source>
        <strain>AX4</strain>
    </source>
</reference>
<reference key="2">
    <citation type="journal article" date="2005" name="Nature">
        <title>The genome of the social amoeba Dictyostelium discoideum.</title>
        <authorList>
            <person name="Eichinger L."/>
            <person name="Pachebat J.A."/>
            <person name="Gloeckner G."/>
            <person name="Rajandream M.A."/>
            <person name="Sucgang R."/>
            <person name="Berriman M."/>
            <person name="Song J."/>
            <person name="Olsen R."/>
            <person name="Szafranski K."/>
            <person name="Xu Q."/>
            <person name="Tunggal B."/>
            <person name="Kummerfeld S."/>
            <person name="Madera M."/>
            <person name="Konfortov B.A."/>
            <person name="Rivero F."/>
            <person name="Bankier A.T."/>
            <person name="Lehmann R."/>
            <person name="Hamlin N."/>
            <person name="Davies R."/>
            <person name="Gaudet P."/>
            <person name="Fey P."/>
            <person name="Pilcher K."/>
            <person name="Chen G."/>
            <person name="Saunders D."/>
            <person name="Sodergren E.J."/>
            <person name="Davis P."/>
            <person name="Kerhornou A."/>
            <person name="Nie X."/>
            <person name="Hall N."/>
            <person name="Anjard C."/>
            <person name="Hemphill L."/>
            <person name="Bason N."/>
            <person name="Farbrother P."/>
            <person name="Desany B."/>
            <person name="Just E."/>
            <person name="Morio T."/>
            <person name="Rost R."/>
            <person name="Churcher C.M."/>
            <person name="Cooper J."/>
            <person name="Haydock S."/>
            <person name="van Driessche N."/>
            <person name="Cronin A."/>
            <person name="Goodhead I."/>
            <person name="Muzny D.M."/>
            <person name="Mourier T."/>
            <person name="Pain A."/>
            <person name="Lu M."/>
            <person name="Harper D."/>
            <person name="Lindsay R."/>
            <person name="Hauser H."/>
            <person name="James K.D."/>
            <person name="Quiles M."/>
            <person name="Madan Babu M."/>
            <person name="Saito T."/>
            <person name="Buchrieser C."/>
            <person name="Wardroper A."/>
            <person name="Felder M."/>
            <person name="Thangavelu M."/>
            <person name="Johnson D."/>
            <person name="Knights A."/>
            <person name="Loulseged H."/>
            <person name="Mungall K.L."/>
            <person name="Oliver K."/>
            <person name="Price C."/>
            <person name="Quail M.A."/>
            <person name="Urushihara H."/>
            <person name="Hernandez J."/>
            <person name="Rabbinowitsch E."/>
            <person name="Steffen D."/>
            <person name="Sanders M."/>
            <person name="Ma J."/>
            <person name="Kohara Y."/>
            <person name="Sharp S."/>
            <person name="Simmonds M.N."/>
            <person name="Spiegler S."/>
            <person name="Tivey A."/>
            <person name="Sugano S."/>
            <person name="White B."/>
            <person name="Walker D."/>
            <person name="Woodward J.R."/>
            <person name="Winckler T."/>
            <person name="Tanaka Y."/>
            <person name="Shaulsky G."/>
            <person name="Schleicher M."/>
            <person name="Weinstock G.M."/>
            <person name="Rosenthal A."/>
            <person name="Cox E.C."/>
            <person name="Chisholm R.L."/>
            <person name="Gibbs R.A."/>
            <person name="Loomis W.F."/>
            <person name="Platzer M."/>
            <person name="Kay R.R."/>
            <person name="Williams J.G."/>
            <person name="Dear P.H."/>
            <person name="Noegel A.A."/>
            <person name="Barrell B.G."/>
            <person name="Kuspa A."/>
        </authorList>
    </citation>
    <scope>NUCLEOTIDE SEQUENCE [LARGE SCALE GENOMIC DNA]</scope>
    <source>
        <strain>AX4</strain>
    </source>
</reference>
<gene>
    <name type="primary">polr3f</name>
    <name type="synonym">rpc34</name>
    <name type="synonym">rpc6</name>
    <name type="ORF">DDB_G0272022</name>
</gene>
<feature type="chain" id="PRO_0000328156" description="DNA-directed RNA polymerase III subunit rpc6">
    <location>
        <begin position="1"/>
        <end position="293"/>
    </location>
</feature>
<protein>
    <recommendedName>
        <fullName>DNA-directed RNA polymerase III subunit rpc6</fullName>
        <shortName>RNA polymerase III subunit C6</shortName>
    </recommendedName>
    <alternativeName>
        <fullName>DNA-directed RNA polymerase III subunit F</fullName>
    </alternativeName>
</protein>
<accession>Q86JM3</accession>
<accession>Q55A81</accession>
<proteinExistence type="inferred from homology"/>
<organism>
    <name type="scientific">Dictyostelium discoideum</name>
    <name type="common">Social amoeba</name>
    <dbReference type="NCBI Taxonomy" id="44689"/>
    <lineage>
        <taxon>Eukaryota</taxon>
        <taxon>Amoebozoa</taxon>
        <taxon>Evosea</taxon>
        <taxon>Eumycetozoa</taxon>
        <taxon>Dictyostelia</taxon>
        <taxon>Dictyosteliales</taxon>
        <taxon>Dictyosteliaceae</taxon>
        <taxon>Dictyostelium</taxon>
    </lineage>
</organism>
<dbReference type="EMBL" id="AAFI02000007">
    <property type="protein sequence ID" value="EAL71445.1"/>
    <property type="molecule type" value="Genomic_DNA"/>
</dbReference>
<dbReference type="RefSeq" id="XP_645385.1">
    <property type="nucleotide sequence ID" value="XM_640293.1"/>
</dbReference>
<dbReference type="SMR" id="Q86JM3"/>
<dbReference type="FunCoup" id="Q86JM3">
    <property type="interactions" value="586"/>
</dbReference>
<dbReference type="STRING" id="44689.Q86JM3"/>
<dbReference type="PaxDb" id="44689-DDB0216315"/>
<dbReference type="EnsemblProtists" id="EAL71445">
    <property type="protein sequence ID" value="EAL71445"/>
    <property type="gene ID" value="DDB_G0272022"/>
</dbReference>
<dbReference type="GeneID" id="8618274"/>
<dbReference type="KEGG" id="ddi:DDB_G0272022"/>
<dbReference type="dictyBase" id="DDB_G0272022">
    <property type="gene designation" value="rpc34"/>
</dbReference>
<dbReference type="VEuPathDB" id="AmoebaDB:DDB_G0272022"/>
<dbReference type="eggNOG" id="KOG3233">
    <property type="taxonomic scope" value="Eukaryota"/>
</dbReference>
<dbReference type="HOGENOM" id="CLU_033661_1_0_1"/>
<dbReference type="InParanoid" id="Q86JM3"/>
<dbReference type="OMA" id="FSCDIFN"/>
<dbReference type="PhylomeDB" id="Q86JM3"/>
<dbReference type="Reactome" id="R-DDI-76061">
    <property type="pathway name" value="RNA Polymerase III Transcription Initiation From Type 1 Promoter"/>
</dbReference>
<dbReference type="Reactome" id="R-DDI-76066">
    <property type="pathway name" value="RNA Polymerase III Transcription Initiation From Type 2 Promoter"/>
</dbReference>
<dbReference type="PRO" id="PR:Q86JM3"/>
<dbReference type="Proteomes" id="UP000002195">
    <property type="component" value="Chromosome 2"/>
</dbReference>
<dbReference type="GO" id="GO:0005666">
    <property type="term" value="C:RNA polymerase III complex"/>
    <property type="evidence" value="ECO:0000250"/>
    <property type="project" value="dictyBase"/>
</dbReference>
<dbReference type="GO" id="GO:0003899">
    <property type="term" value="F:DNA-directed RNA polymerase activity"/>
    <property type="evidence" value="ECO:0000250"/>
    <property type="project" value="dictyBase"/>
</dbReference>
<dbReference type="GO" id="GO:0006383">
    <property type="term" value="P:transcription by RNA polymerase III"/>
    <property type="evidence" value="ECO:0000250"/>
    <property type="project" value="dictyBase"/>
</dbReference>
<dbReference type="FunFam" id="1.10.10.10:FF:000116">
    <property type="entry name" value="DNA-directed RNA polymerase III subunit RPC6"/>
    <property type="match status" value="1"/>
</dbReference>
<dbReference type="FunFam" id="1.10.10.10:FF:000237">
    <property type="entry name" value="DNA-directed RNA polymerase III subunit RPC6"/>
    <property type="match status" value="1"/>
</dbReference>
<dbReference type="Gene3D" id="1.10.10.10">
    <property type="entry name" value="Winged helix-like DNA-binding domain superfamily/Winged helix DNA-binding domain"/>
    <property type="match status" value="2"/>
</dbReference>
<dbReference type="InterPro" id="IPR007832">
    <property type="entry name" value="RNA_pol_Rpc34"/>
</dbReference>
<dbReference type="InterPro" id="IPR016049">
    <property type="entry name" value="RNA_pol_Rpc34-like"/>
</dbReference>
<dbReference type="InterPro" id="IPR036388">
    <property type="entry name" value="WH-like_DNA-bd_sf"/>
</dbReference>
<dbReference type="InterPro" id="IPR036390">
    <property type="entry name" value="WH_DNA-bd_sf"/>
</dbReference>
<dbReference type="PANTHER" id="PTHR12780">
    <property type="entry name" value="RNA POLYMERASE III DNA DIRECTED , 39KD SUBUNIT-RELATED"/>
    <property type="match status" value="1"/>
</dbReference>
<dbReference type="Pfam" id="PF05158">
    <property type="entry name" value="RNA_pol_Rpc34"/>
    <property type="match status" value="2"/>
</dbReference>
<dbReference type="PIRSF" id="PIRSF028763">
    <property type="entry name" value="RNA_pol_Rpc34"/>
    <property type="match status" value="1"/>
</dbReference>
<dbReference type="SUPFAM" id="SSF46785">
    <property type="entry name" value="Winged helix' DNA-binding domain"/>
    <property type="match status" value="1"/>
</dbReference>
<name>RPC6_DICDI</name>